<gene>
    <name type="ordered locus">YNL320W</name>
    <name type="ORF">N0342</name>
</gene>
<reference key="1">
    <citation type="journal article" date="1995" name="Yeast">
        <title>Sequencing analysis of a 24.7 kb fragment of yeast chromosome XIV identifies six known genes, a new member of the hexose transporter family and ten new open reading frames.</title>
        <authorList>
            <person name="Maftahi M."/>
            <person name="Nicaud J.-M."/>
            <person name="Levesque H."/>
            <person name="Gaillardin C."/>
        </authorList>
    </citation>
    <scope>NUCLEOTIDE SEQUENCE [GENOMIC DNA]</scope>
    <source>
        <strain>S288c / FY1676</strain>
    </source>
</reference>
<reference key="2">
    <citation type="journal article" date="1997" name="Nature">
        <title>The nucleotide sequence of Saccharomyces cerevisiae chromosome XIV and its evolutionary implications.</title>
        <authorList>
            <person name="Philippsen P."/>
            <person name="Kleine K."/>
            <person name="Poehlmann R."/>
            <person name="Duesterhoeft A."/>
            <person name="Hamberg K."/>
            <person name="Hegemann J.H."/>
            <person name="Obermaier B."/>
            <person name="Urrestarazu L.A."/>
            <person name="Aert R."/>
            <person name="Albermann K."/>
            <person name="Altmann R."/>
            <person name="Andre B."/>
            <person name="Baladron V."/>
            <person name="Ballesta J.P.G."/>
            <person name="Becam A.-M."/>
            <person name="Beinhauer J.D."/>
            <person name="Boskovic J."/>
            <person name="Buitrago M.J."/>
            <person name="Bussereau F."/>
            <person name="Coster F."/>
            <person name="Crouzet M."/>
            <person name="D'Angelo M."/>
            <person name="Dal Pero F."/>
            <person name="De Antoni A."/>
            <person name="del Rey F."/>
            <person name="Doignon F."/>
            <person name="Domdey H."/>
            <person name="Dubois E."/>
            <person name="Fiedler T.A."/>
            <person name="Fleig U."/>
            <person name="Floeth M."/>
            <person name="Fritz C."/>
            <person name="Gaillardin C."/>
            <person name="Garcia-Cantalejo J.M."/>
            <person name="Glansdorff N."/>
            <person name="Goffeau A."/>
            <person name="Gueldener U."/>
            <person name="Herbert C.J."/>
            <person name="Heumann K."/>
            <person name="Heuss-Neitzel D."/>
            <person name="Hilbert H."/>
            <person name="Hinni K."/>
            <person name="Iraqui Houssaini I."/>
            <person name="Jacquet M."/>
            <person name="Jimenez A."/>
            <person name="Jonniaux J.-L."/>
            <person name="Karpfinger-Hartl L."/>
            <person name="Lanfranchi G."/>
            <person name="Lepingle A."/>
            <person name="Levesque H."/>
            <person name="Lyck R."/>
            <person name="Maftahi M."/>
            <person name="Mallet L."/>
            <person name="Maurer C.T.C."/>
            <person name="Messenguy F."/>
            <person name="Mewes H.-W."/>
            <person name="Moestl D."/>
            <person name="Nasr F."/>
            <person name="Nicaud J.-M."/>
            <person name="Niedenthal R.K."/>
            <person name="Pandolfo D."/>
            <person name="Pierard A."/>
            <person name="Piravandi E."/>
            <person name="Planta R.J."/>
            <person name="Pohl T.M."/>
            <person name="Purnelle B."/>
            <person name="Rebischung C."/>
            <person name="Remacha M.A."/>
            <person name="Revuelta J.L."/>
            <person name="Rinke M."/>
            <person name="Saiz J.E."/>
            <person name="Sartorello F."/>
            <person name="Scherens B."/>
            <person name="Sen-Gupta M."/>
            <person name="Soler-Mira A."/>
            <person name="Urbanus J.H.M."/>
            <person name="Valle G."/>
            <person name="Van Dyck L."/>
            <person name="Verhasselt P."/>
            <person name="Vierendeels F."/>
            <person name="Vissers S."/>
            <person name="Voet M."/>
            <person name="Volckaert G."/>
            <person name="Wach A."/>
            <person name="Wambutt R."/>
            <person name="Wedler H."/>
            <person name="Zollner A."/>
            <person name="Hani J."/>
        </authorList>
    </citation>
    <scope>NUCLEOTIDE SEQUENCE [LARGE SCALE GENOMIC DNA]</scope>
    <source>
        <strain>ATCC 204508 / S288c</strain>
    </source>
</reference>
<reference key="3">
    <citation type="journal article" date="2014" name="G3 (Bethesda)">
        <title>The reference genome sequence of Saccharomyces cerevisiae: Then and now.</title>
        <authorList>
            <person name="Engel S.R."/>
            <person name="Dietrich F.S."/>
            <person name="Fisk D.G."/>
            <person name="Binkley G."/>
            <person name="Balakrishnan R."/>
            <person name="Costanzo M.C."/>
            <person name="Dwight S.S."/>
            <person name="Hitz B.C."/>
            <person name="Karra K."/>
            <person name="Nash R.S."/>
            <person name="Weng S."/>
            <person name="Wong E.D."/>
            <person name="Lloyd P."/>
            <person name="Skrzypek M.S."/>
            <person name="Miyasato S.R."/>
            <person name="Simison M."/>
            <person name="Cherry J.M."/>
        </authorList>
    </citation>
    <scope>GENOME REANNOTATION</scope>
    <source>
        <strain>ATCC 204508 / S288c</strain>
    </source>
</reference>
<reference key="4">
    <citation type="journal article" date="2003" name="Nature">
        <title>Global analysis of protein expression in yeast.</title>
        <authorList>
            <person name="Ghaemmaghami S."/>
            <person name="Huh W.-K."/>
            <person name="Bower K."/>
            <person name="Howson R.W."/>
            <person name="Belle A."/>
            <person name="Dephoure N."/>
            <person name="O'Shea E.K."/>
            <person name="Weissman J.S."/>
        </authorList>
    </citation>
    <scope>LEVEL OF PROTEIN EXPRESSION [LARGE SCALE ANALYSIS]</scope>
</reference>
<reference key="5">
    <citation type="journal article" date="2006" name="J. Proteome Res.">
        <title>Toward the complete yeast mitochondrial proteome: multidimensional separation techniques for mitochondrial proteomics.</title>
        <authorList>
            <person name="Reinders J."/>
            <person name="Zahedi R.P."/>
            <person name="Pfanner N."/>
            <person name="Meisinger C."/>
            <person name="Sickmann A."/>
        </authorList>
    </citation>
    <scope>SUBCELLULAR LOCATION [LARGE SCALE ANALYSIS]</scope>
    <scope>IDENTIFICATION BY MASS SPECTROMETRY</scope>
</reference>
<reference key="6">
    <citation type="journal article" date="2006" name="Proc. Natl. Acad. Sci. U.S.A.">
        <title>A global topology map of the Saccharomyces cerevisiae membrane proteome.</title>
        <authorList>
            <person name="Kim H."/>
            <person name="Melen K."/>
            <person name="Oesterberg M."/>
            <person name="von Heijne G."/>
        </authorList>
    </citation>
    <scope>TOPOLOGY [LARGE SCALE ANALYSIS]</scope>
    <source>
        <strain>ATCC 208353 / W303-1A</strain>
    </source>
</reference>
<accession>P42840</accession>
<accession>D6W0M6</accession>
<feature type="chain" id="PRO_0000203364" description="Uncharacterized membrane protein YNL320W">
    <location>
        <begin position="1"/>
        <end position="284"/>
    </location>
</feature>
<feature type="topological domain" description="Cytoplasmic" evidence="1">
    <location>
        <begin position="1"/>
        <end position="8"/>
    </location>
</feature>
<feature type="transmembrane region" description="Helical" evidence="1">
    <location>
        <begin position="9"/>
        <end position="25"/>
    </location>
</feature>
<feature type="topological domain" description="Extracellular" evidence="1">
    <location>
        <begin position="26"/>
        <end position="80"/>
    </location>
</feature>
<feature type="transmembrane region" description="Helical" evidence="1">
    <location>
        <begin position="81"/>
        <end position="101"/>
    </location>
</feature>
<feature type="topological domain" description="Cytoplasmic" evidence="1">
    <location>
        <begin position="102"/>
        <end position="284"/>
    </location>
</feature>
<evidence type="ECO:0000255" key="1"/>
<evidence type="ECO:0000269" key="2">
    <source>
    </source>
</evidence>
<evidence type="ECO:0000269" key="3">
    <source>
    </source>
</evidence>
<evidence type="ECO:0000305" key="4"/>
<comment type="subcellular location">
    <subcellularLocation>
        <location evidence="3">Mitochondrion membrane</location>
        <topology evidence="3">Multi-pass membrane protein</topology>
    </subcellularLocation>
</comment>
<comment type="miscellaneous">
    <text evidence="2">Present with 259 molecules/cell in log phase SD medium.</text>
</comment>
<comment type="similarity">
    <text evidence="4">To S.pombe bem46 and M.tuberculosis Rv2307c.</text>
</comment>
<organism>
    <name type="scientific">Saccharomyces cerevisiae (strain ATCC 204508 / S288c)</name>
    <name type="common">Baker's yeast</name>
    <dbReference type="NCBI Taxonomy" id="559292"/>
    <lineage>
        <taxon>Eukaryota</taxon>
        <taxon>Fungi</taxon>
        <taxon>Dikarya</taxon>
        <taxon>Ascomycota</taxon>
        <taxon>Saccharomycotina</taxon>
        <taxon>Saccharomycetes</taxon>
        <taxon>Saccharomycetales</taxon>
        <taxon>Saccharomycetaceae</taxon>
        <taxon>Saccharomyces</taxon>
    </lineage>
</organism>
<name>YN60_YEAST</name>
<dbReference type="EMBL" id="Z46259">
    <property type="protein sequence ID" value="CAA86377.1"/>
    <property type="molecule type" value="Genomic_DNA"/>
</dbReference>
<dbReference type="EMBL" id="Z71596">
    <property type="protein sequence ID" value="CAA96251.1"/>
    <property type="molecule type" value="Genomic_DNA"/>
</dbReference>
<dbReference type="EMBL" id="BK006947">
    <property type="protein sequence ID" value="DAA10242.1"/>
    <property type="molecule type" value="Genomic_DNA"/>
</dbReference>
<dbReference type="PIR" id="S51294">
    <property type="entry name" value="S51294"/>
</dbReference>
<dbReference type="RefSeq" id="NP_014079.1">
    <property type="nucleotide sequence ID" value="NM_001183158.1"/>
</dbReference>
<dbReference type="SMR" id="P42840"/>
<dbReference type="BioGRID" id="35520">
    <property type="interactions" value="22"/>
</dbReference>
<dbReference type="DIP" id="DIP-4158N"/>
<dbReference type="FunCoup" id="P42840">
    <property type="interactions" value="734"/>
</dbReference>
<dbReference type="IntAct" id="P42840">
    <property type="interactions" value="1"/>
</dbReference>
<dbReference type="STRING" id="4932.YNL320W"/>
<dbReference type="ESTHER" id="yeast-yn60">
    <property type="family name" value="ABHD13-BEM46"/>
</dbReference>
<dbReference type="MEROPS" id="S09.A35"/>
<dbReference type="iPTMnet" id="P42840"/>
<dbReference type="PaxDb" id="4932-YNL320W"/>
<dbReference type="PeptideAtlas" id="P42840"/>
<dbReference type="EnsemblFungi" id="YNL320W_mRNA">
    <property type="protein sequence ID" value="YNL320W"/>
    <property type="gene ID" value="YNL320W"/>
</dbReference>
<dbReference type="GeneID" id="855396"/>
<dbReference type="KEGG" id="sce:YNL320W"/>
<dbReference type="AGR" id="SGD:S000005264"/>
<dbReference type="SGD" id="S000005264">
    <property type="gene designation" value="YNL320W"/>
</dbReference>
<dbReference type="VEuPathDB" id="FungiDB:YNL320W"/>
<dbReference type="eggNOG" id="KOG4391">
    <property type="taxonomic scope" value="Eukaryota"/>
</dbReference>
<dbReference type="GeneTree" id="ENSGT00940000158114"/>
<dbReference type="HOGENOM" id="CLU_029375_2_0_1"/>
<dbReference type="InParanoid" id="P42840"/>
<dbReference type="OMA" id="QYWTSED"/>
<dbReference type="OrthoDB" id="10249433at2759"/>
<dbReference type="BioCyc" id="YEAST:G3O-33305-MONOMER"/>
<dbReference type="BioGRID-ORCS" id="855396">
    <property type="hits" value="0 hits in 10 CRISPR screens"/>
</dbReference>
<dbReference type="PRO" id="PR:P42840"/>
<dbReference type="Proteomes" id="UP000002311">
    <property type="component" value="Chromosome XIV"/>
</dbReference>
<dbReference type="RNAct" id="P42840">
    <property type="molecule type" value="protein"/>
</dbReference>
<dbReference type="GO" id="GO:0000324">
    <property type="term" value="C:fungal-type vacuole"/>
    <property type="evidence" value="ECO:0007005"/>
    <property type="project" value="SGD"/>
</dbReference>
<dbReference type="GO" id="GO:0016020">
    <property type="term" value="C:membrane"/>
    <property type="evidence" value="ECO:0000318"/>
    <property type="project" value="GO_Central"/>
</dbReference>
<dbReference type="GO" id="GO:0031966">
    <property type="term" value="C:mitochondrial membrane"/>
    <property type="evidence" value="ECO:0007669"/>
    <property type="project" value="UniProtKB-SubCell"/>
</dbReference>
<dbReference type="GO" id="GO:0005739">
    <property type="term" value="C:mitochondrion"/>
    <property type="evidence" value="ECO:0007005"/>
    <property type="project" value="SGD"/>
</dbReference>
<dbReference type="GO" id="GO:0008474">
    <property type="term" value="F:palmitoyl-(protein) hydrolase activity"/>
    <property type="evidence" value="ECO:0000318"/>
    <property type="project" value="GO_Central"/>
</dbReference>
<dbReference type="FunFam" id="3.40.50.1820:FF:000473">
    <property type="entry name" value="YNL320W-like protein"/>
    <property type="match status" value="1"/>
</dbReference>
<dbReference type="Gene3D" id="3.40.50.1820">
    <property type="entry name" value="alpha/beta hydrolase"/>
    <property type="match status" value="1"/>
</dbReference>
<dbReference type="InterPro" id="IPR029058">
    <property type="entry name" value="AB_hydrolase_fold"/>
</dbReference>
<dbReference type="InterPro" id="IPR022742">
    <property type="entry name" value="Hydrolase_4"/>
</dbReference>
<dbReference type="PANTHER" id="PTHR12277">
    <property type="entry name" value="ALPHA/BETA HYDROLASE DOMAIN-CONTAINING PROTEIN"/>
    <property type="match status" value="1"/>
</dbReference>
<dbReference type="PANTHER" id="PTHR12277:SF81">
    <property type="entry name" value="PROTEIN ABHD13"/>
    <property type="match status" value="1"/>
</dbReference>
<dbReference type="Pfam" id="PF12146">
    <property type="entry name" value="Hydrolase_4"/>
    <property type="match status" value="1"/>
</dbReference>
<dbReference type="SUPFAM" id="SSF53474">
    <property type="entry name" value="alpha/beta-Hydrolases"/>
    <property type="match status" value="1"/>
</dbReference>
<proteinExistence type="evidence at protein level"/>
<protein>
    <recommendedName>
        <fullName>Uncharacterized membrane protein YNL320W</fullName>
    </recommendedName>
</protein>
<sequence>MLWKVSKMFLGGLVALTTISVATLYHYQNRLVYPSWAQGARNHVDTPDSRGIPYEKLTLITQDHIKLEAWDIKNENSTSTVLILCPNAGNIGYFILIIDIFYRQFGMSVFIYSYRGYGNSEGSPSEKGLKLDADCVISHLSTDSFHSKRKLVLYGRSLGGANALYIASKFRDLCDGVILENTFLSIRKVIPYIFPLLKRFTLLCHEIWNSEGLMGSCSSETPFLFLSGLKDEIVPPFHMRKLYETCPSSNKKIFEFPLGSHNDTIIQDGYWDIIRDFLIEKGFI</sequence>
<keyword id="KW-0472">Membrane</keyword>
<keyword id="KW-0496">Mitochondrion</keyword>
<keyword id="KW-1185">Reference proteome</keyword>
<keyword id="KW-0812">Transmembrane</keyword>
<keyword id="KW-1133">Transmembrane helix</keyword>